<comment type="function">
    <text evidence="1">Catalyzes the NADPH-dependent reduction of glutamyl-tRNA(Glu) to glutamate 1-semialdehyde (GSA).</text>
</comment>
<comment type="catalytic activity">
    <reaction evidence="1">
        <text>(S)-4-amino-5-oxopentanoate + tRNA(Glu) + NADP(+) = L-glutamyl-tRNA(Glu) + NADPH + H(+)</text>
        <dbReference type="Rhea" id="RHEA:12344"/>
        <dbReference type="Rhea" id="RHEA-COMP:9663"/>
        <dbReference type="Rhea" id="RHEA-COMP:9680"/>
        <dbReference type="ChEBI" id="CHEBI:15378"/>
        <dbReference type="ChEBI" id="CHEBI:57501"/>
        <dbReference type="ChEBI" id="CHEBI:57783"/>
        <dbReference type="ChEBI" id="CHEBI:58349"/>
        <dbReference type="ChEBI" id="CHEBI:78442"/>
        <dbReference type="ChEBI" id="CHEBI:78520"/>
        <dbReference type="EC" id="1.2.1.70"/>
    </reaction>
</comment>
<comment type="pathway">
    <text evidence="1">Porphyrin-containing compound metabolism; protoporphyrin-IX biosynthesis; 5-aminolevulinate from L-glutamyl-tRNA(Glu): step 1/2.</text>
</comment>
<comment type="subunit">
    <text evidence="1">Homodimer.</text>
</comment>
<comment type="domain">
    <text evidence="1">Possesses an unusual extended V-shaped dimeric structure with each monomer consisting of three distinct domains arranged along a curved 'spinal' alpha-helix. The N-terminal catalytic domain specifically recognizes the glutamate moiety of the substrate. The second domain is the NADPH-binding domain, and the third C-terminal domain is responsible for dimerization.</text>
</comment>
<comment type="miscellaneous">
    <text evidence="1">During catalysis, the active site Cys acts as a nucleophile attacking the alpha-carbonyl group of tRNA-bound glutamate with the formation of a thioester intermediate between enzyme and glutamate, and the concomitant release of tRNA(Glu). The thioester intermediate is finally reduced by direct hydride transfer from NADPH, to form the product GSA.</text>
</comment>
<comment type="similarity">
    <text evidence="1">Belongs to the glutamyl-tRNA reductase family.</text>
</comment>
<dbReference type="EC" id="1.2.1.70" evidence="1"/>
<dbReference type="EMBL" id="AM406670">
    <property type="protein sequence ID" value="CAL93597.1"/>
    <property type="molecule type" value="Genomic_DNA"/>
</dbReference>
<dbReference type="RefSeq" id="WP_011764714.1">
    <property type="nucleotide sequence ID" value="NC_008702.1"/>
</dbReference>
<dbReference type="SMR" id="A1K442"/>
<dbReference type="STRING" id="62928.azo0980"/>
<dbReference type="KEGG" id="aoa:dqs_1081"/>
<dbReference type="KEGG" id="azo:azo0980"/>
<dbReference type="eggNOG" id="COG0373">
    <property type="taxonomic scope" value="Bacteria"/>
</dbReference>
<dbReference type="HOGENOM" id="CLU_035113_2_2_4"/>
<dbReference type="OrthoDB" id="110209at2"/>
<dbReference type="UniPathway" id="UPA00251">
    <property type="reaction ID" value="UER00316"/>
</dbReference>
<dbReference type="Proteomes" id="UP000002588">
    <property type="component" value="Chromosome"/>
</dbReference>
<dbReference type="GO" id="GO:0008883">
    <property type="term" value="F:glutamyl-tRNA reductase activity"/>
    <property type="evidence" value="ECO:0007669"/>
    <property type="project" value="UniProtKB-UniRule"/>
</dbReference>
<dbReference type="GO" id="GO:0050661">
    <property type="term" value="F:NADP binding"/>
    <property type="evidence" value="ECO:0007669"/>
    <property type="project" value="InterPro"/>
</dbReference>
<dbReference type="GO" id="GO:0019353">
    <property type="term" value="P:protoporphyrinogen IX biosynthetic process from glutamate"/>
    <property type="evidence" value="ECO:0007669"/>
    <property type="project" value="TreeGrafter"/>
</dbReference>
<dbReference type="CDD" id="cd05213">
    <property type="entry name" value="NAD_bind_Glutamyl_tRNA_reduct"/>
    <property type="match status" value="1"/>
</dbReference>
<dbReference type="FunFam" id="3.30.460.30:FF:000001">
    <property type="entry name" value="Glutamyl-tRNA reductase"/>
    <property type="match status" value="1"/>
</dbReference>
<dbReference type="FunFam" id="3.40.50.720:FF:000031">
    <property type="entry name" value="Glutamyl-tRNA reductase"/>
    <property type="match status" value="1"/>
</dbReference>
<dbReference type="Gene3D" id="3.30.460.30">
    <property type="entry name" value="Glutamyl-tRNA reductase, N-terminal domain"/>
    <property type="match status" value="1"/>
</dbReference>
<dbReference type="Gene3D" id="3.40.50.720">
    <property type="entry name" value="NAD(P)-binding Rossmann-like Domain"/>
    <property type="match status" value="1"/>
</dbReference>
<dbReference type="HAMAP" id="MF_00087">
    <property type="entry name" value="Glu_tRNA_reductase"/>
    <property type="match status" value="1"/>
</dbReference>
<dbReference type="InterPro" id="IPR000343">
    <property type="entry name" value="4pyrrol_synth_GluRdtase"/>
</dbReference>
<dbReference type="InterPro" id="IPR015896">
    <property type="entry name" value="4pyrrol_synth_GluRdtase_dimer"/>
</dbReference>
<dbReference type="InterPro" id="IPR015895">
    <property type="entry name" value="4pyrrol_synth_GluRdtase_N"/>
</dbReference>
<dbReference type="InterPro" id="IPR018214">
    <property type="entry name" value="GluRdtase_CS"/>
</dbReference>
<dbReference type="InterPro" id="IPR036453">
    <property type="entry name" value="GluRdtase_dimer_dom_sf"/>
</dbReference>
<dbReference type="InterPro" id="IPR036343">
    <property type="entry name" value="GluRdtase_N_sf"/>
</dbReference>
<dbReference type="InterPro" id="IPR036291">
    <property type="entry name" value="NAD(P)-bd_dom_sf"/>
</dbReference>
<dbReference type="InterPro" id="IPR006151">
    <property type="entry name" value="Shikm_DH/Glu-tRNA_Rdtase"/>
</dbReference>
<dbReference type="NCBIfam" id="TIGR01035">
    <property type="entry name" value="hemA"/>
    <property type="match status" value="1"/>
</dbReference>
<dbReference type="PANTHER" id="PTHR43013">
    <property type="entry name" value="GLUTAMYL-TRNA REDUCTASE"/>
    <property type="match status" value="1"/>
</dbReference>
<dbReference type="PANTHER" id="PTHR43013:SF1">
    <property type="entry name" value="GLUTAMYL-TRNA REDUCTASE"/>
    <property type="match status" value="1"/>
</dbReference>
<dbReference type="Pfam" id="PF00745">
    <property type="entry name" value="GlutR_dimer"/>
    <property type="match status" value="1"/>
</dbReference>
<dbReference type="Pfam" id="PF05201">
    <property type="entry name" value="GlutR_N"/>
    <property type="match status" value="1"/>
</dbReference>
<dbReference type="Pfam" id="PF01488">
    <property type="entry name" value="Shikimate_DH"/>
    <property type="match status" value="1"/>
</dbReference>
<dbReference type="PIRSF" id="PIRSF000445">
    <property type="entry name" value="4pyrrol_synth_GluRdtase"/>
    <property type="match status" value="1"/>
</dbReference>
<dbReference type="SUPFAM" id="SSF69742">
    <property type="entry name" value="Glutamyl tRNA-reductase catalytic, N-terminal domain"/>
    <property type="match status" value="1"/>
</dbReference>
<dbReference type="SUPFAM" id="SSF69075">
    <property type="entry name" value="Glutamyl tRNA-reductase dimerization domain"/>
    <property type="match status" value="1"/>
</dbReference>
<dbReference type="SUPFAM" id="SSF51735">
    <property type="entry name" value="NAD(P)-binding Rossmann-fold domains"/>
    <property type="match status" value="1"/>
</dbReference>
<dbReference type="PROSITE" id="PS00747">
    <property type="entry name" value="GLUTR"/>
    <property type="match status" value="1"/>
</dbReference>
<keyword id="KW-0521">NADP</keyword>
<keyword id="KW-0560">Oxidoreductase</keyword>
<keyword id="KW-0627">Porphyrin biosynthesis</keyword>
<keyword id="KW-1185">Reference proteome</keyword>
<evidence type="ECO:0000255" key="1">
    <source>
        <dbReference type="HAMAP-Rule" id="MF_00087"/>
    </source>
</evidence>
<proteinExistence type="inferred from homology"/>
<name>HEM1_AZOSB</name>
<reference key="1">
    <citation type="journal article" date="2006" name="Nat. Biotechnol.">
        <title>Complete genome of the mutualistic, N2-fixing grass endophyte Azoarcus sp. strain BH72.</title>
        <authorList>
            <person name="Krause A."/>
            <person name="Ramakumar A."/>
            <person name="Bartels D."/>
            <person name="Battistoni F."/>
            <person name="Bekel T."/>
            <person name="Boch J."/>
            <person name="Boehm M."/>
            <person name="Friedrich F."/>
            <person name="Hurek T."/>
            <person name="Krause L."/>
            <person name="Linke B."/>
            <person name="McHardy A.C."/>
            <person name="Sarkar A."/>
            <person name="Schneiker S."/>
            <person name="Syed A.A."/>
            <person name="Thauer R."/>
            <person name="Vorhoelter F.-J."/>
            <person name="Weidner S."/>
            <person name="Puehler A."/>
            <person name="Reinhold-Hurek B."/>
            <person name="Kaiser O."/>
            <person name="Goesmann A."/>
        </authorList>
    </citation>
    <scope>NUCLEOTIDE SEQUENCE [LARGE SCALE GENOMIC DNA]</scope>
    <source>
        <strain>BH72</strain>
    </source>
</reference>
<sequence>MQLYALGLNHHTAPLAIRERVAFQPDRLDQALQALTDSRTVSEAAILSTCNRTELYFAAEQPQRAADWLAGFHQLPLAQVSPYLYSYPQRDAVRHVFRVASGLDSMVLGEPQILGQVKEAARRAEEAGTLGTLLHKLFQNTFAVAKEVRSTTAIGANIVSMAAAAVHLTGRIFERVSDQHVLFIGAGEMIELCAAHFAGAGPRSMTVANRTEARAEALAARLGAQTMRLDAIADALPRFDVVVSCTASPLPIVGLGMVERAVKVRRHRPIVMVDLAVPRDVEPEVGQLDDVFLYTVDDLAQVVDAGIESRQQAVVEAEGIIDQRVDGFLHWLHARDAVPTIRALREHAETLRRGEIERALRQLAKGEDPQAVLDALSHGLTNKLMHGPTRFLTQAEGEGQAEASRVVQQLFNLSRHD</sequence>
<organism>
    <name type="scientific">Azoarcus sp. (strain BH72)</name>
    <dbReference type="NCBI Taxonomy" id="418699"/>
    <lineage>
        <taxon>Bacteria</taxon>
        <taxon>Pseudomonadati</taxon>
        <taxon>Pseudomonadota</taxon>
        <taxon>Betaproteobacteria</taxon>
        <taxon>Rhodocyclales</taxon>
        <taxon>Zoogloeaceae</taxon>
        <taxon>Azoarcus</taxon>
    </lineage>
</organism>
<accession>A1K442</accession>
<feature type="chain" id="PRO_1000004593" description="Glutamyl-tRNA reductase">
    <location>
        <begin position="1"/>
        <end position="417"/>
    </location>
</feature>
<feature type="active site" description="Nucleophile" evidence="1">
    <location>
        <position position="50"/>
    </location>
</feature>
<feature type="binding site" evidence="1">
    <location>
        <begin position="49"/>
        <end position="52"/>
    </location>
    <ligand>
        <name>substrate</name>
    </ligand>
</feature>
<feature type="binding site" evidence="1">
    <location>
        <position position="105"/>
    </location>
    <ligand>
        <name>substrate</name>
    </ligand>
</feature>
<feature type="binding site" evidence="1">
    <location>
        <begin position="110"/>
        <end position="112"/>
    </location>
    <ligand>
        <name>substrate</name>
    </ligand>
</feature>
<feature type="binding site" evidence="1">
    <location>
        <position position="116"/>
    </location>
    <ligand>
        <name>substrate</name>
    </ligand>
</feature>
<feature type="binding site" evidence="1">
    <location>
        <begin position="185"/>
        <end position="190"/>
    </location>
    <ligand>
        <name>NADP(+)</name>
        <dbReference type="ChEBI" id="CHEBI:58349"/>
    </ligand>
</feature>
<feature type="site" description="Important for activity" evidence="1">
    <location>
        <position position="95"/>
    </location>
</feature>
<protein>
    <recommendedName>
        <fullName evidence="1">Glutamyl-tRNA reductase</fullName>
        <shortName evidence="1">GluTR</shortName>
        <ecNumber evidence="1">1.2.1.70</ecNumber>
    </recommendedName>
</protein>
<gene>
    <name evidence="1" type="primary">hemA</name>
    <name type="ordered locus">azo0980</name>
</gene>